<dbReference type="EC" id="3.5.4.16" evidence="2"/>
<dbReference type="EMBL" id="AP008231">
    <property type="protein sequence ID" value="BAD78244.1"/>
    <property type="molecule type" value="Genomic_DNA"/>
</dbReference>
<dbReference type="SMR" id="Q5N623"/>
<dbReference type="KEGG" id="syc:syc0054_d"/>
<dbReference type="eggNOG" id="COG0302">
    <property type="taxonomic scope" value="Bacteria"/>
</dbReference>
<dbReference type="UniPathway" id="UPA00848">
    <property type="reaction ID" value="UER00151"/>
</dbReference>
<dbReference type="Proteomes" id="UP000001175">
    <property type="component" value="Chromosome"/>
</dbReference>
<dbReference type="GO" id="GO:0005737">
    <property type="term" value="C:cytoplasm"/>
    <property type="evidence" value="ECO:0007669"/>
    <property type="project" value="TreeGrafter"/>
</dbReference>
<dbReference type="GO" id="GO:0005525">
    <property type="term" value="F:GTP binding"/>
    <property type="evidence" value="ECO:0007669"/>
    <property type="project" value="UniProtKB-KW"/>
</dbReference>
<dbReference type="GO" id="GO:0003934">
    <property type="term" value="F:GTP cyclohydrolase I activity"/>
    <property type="evidence" value="ECO:0007669"/>
    <property type="project" value="UniProtKB-UniRule"/>
</dbReference>
<dbReference type="GO" id="GO:0008270">
    <property type="term" value="F:zinc ion binding"/>
    <property type="evidence" value="ECO:0007669"/>
    <property type="project" value="UniProtKB-UniRule"/>
</dbReference>
<dbReference type="GO" id="GO:0006730">
    <property type="term" value="P:one-carbon metabolic process"/>
    <property type="evidence" value="ECO:0007669"/>
    <property type="project" value="UniProtKB-UniRule"/>
</dbReference>
<dbReference type="GO" id="GO:0006729">
    <property type="term" value="P:tetrahydrobiopterin biosynthetic process"/>
    <property type="evidence" value="ECO:0007669"/>
    <property type="project" value="TreeGrafter"/>
</dbReference>
<dbReference type="GO" id="GO:0046654">
    <property type="term" value="P:tetrahydrofolate biosynthetic process"/>
    <property type="evidence" value="ECO:0007669"/>
    <property type="project" value="UniProtKB-UniRule"/>
</dbReference>
<dbReference type="CDD" id="cd00642">
    <property type="entry name" value="GTP_cyclohydro1"/>
    <property type="match status" value="1"/>
</dbReference>
<dbReference type="FunFam" id="3.30.1130.10:FF:000012">
    <property type="entry name" value="GTP cyclohydrolase 1"/>
    <property type="match status" value="1"/>
</dbReference>
<dbReference type="Gene3D" id="1.10.286.10">
    <property type="match status" value="1"/>
</dbReference>
<dbReference type="Gene3D" id="3.30.1130.10">
    <property type="match status" value="1"/>
</dbReference>
<dbReference type="HAMAP" id="MF_00223">
    <property type="entry name" value="FolE"/>
    <property type="match status" value="1"/>
</dbReference>
<dbReference type="InterPro" id="IPR043133">
    <property type="entry name" value="GTP-CH-I_C/QueF"/>
</dbReference>
<dbReference type="InterPro" id="IPR043134">
    <property type="entry name" value="GTP-CH-I_N"/>
</dbReference>
<dbReference type="InterPro" id="IPR001474">
    <property type="entry name" value="GTP_CycHdrlase_I"/>
</dbReference>
<dbReference type="InterPro" id="IPR018234">
    <property type="entry name" value="GTP_CycHdrlase_I_CS"/>
</dbReference>
<dbReference type="InterPro" id="IPR020602">
    <property type="entry name" value="GTP_CycHdrlase_I_dom"/>
</dbReference>
<dbReference type="NCBIfam" id="TIGR00063">
    <property type="entry name" value="folE"/>
    <property type="match status" value="1"/>
</dbReference>
<dbReference type="NCBIfam" id="NF006825">
    <property type="entry name" value="PRK09347.1-2"/>
    <property type="match status" value="1"/>
</dbReference>
<dbReference type="NCBIfam" id="NF006826">
    <property type="entry name" value="PRK09347.1-3"/>
    <property type="match status" value="1"/>
</dbReference>
<dbReference type="PANTHER" id="PTHR11109:SF7">
    <property type="entry name" value="GTP CYCLOHYDROLASE 1"/>
    <property type="match status" value="1"/>
</dbReference>
<dbReference type="PANTHER" id="PTHR11109">
    <property type="entry name" value="GTP CYCLOHYDROLASE I"/>
    <property type="match status" value="1"/>
</dbReference>
<dbReference type="Pfam" id="PF01227">
    <property type="entry name" value="GTP_cyclohydroI"/>
    <property type="match status" value="1"/>
</dbReference>
<dbReference type="SUPFAM" id="SSF55620">
    <property type="entry name" value="Tetrahydrobiopterin biosynthesis enzymes-like"/>
    <property type="match status" value="1"/>
</dbReference>
<dbReference type="PROSITE" id="PS00859">
    <property type="entry name" value="GTP_CYCLOHYDROL_1_1"/>
    <property type="match status" value="1"/>
</dbReference>
<dbReference type="PROSITE" id="PS00860">
    <property type="entry name" value="GTP_CYCLOHYDROL_1_2"/>
    <property type="match status" value="1"/>
</dbReference>
<evidence type="ECO:0000250" key="1"/>
<evidence type="ECO:0000255" key="2">
    <source>
        <dbReference type="HAMAP-Rule" id="MF_00223"/>
    </source>
</evidence>
<accession>Q5N623</accession>
<feature type="chain" id="PRO_1000043754" description="GTP cyclohydrolase 1">
    <location>
        <begin position="1"/>
        <end position="213"/>
    </location>
</feature>
<feature type="binding site" evidence="2">
    <location>
        <position position="98"/>
    </location>
    <ligand>
        <name>Zn(2+)</name>
        <dbReference type="ChEBI" id="CHEBI:29105"/>
    </ligand>
</feature>
<feature type="binding site" evidence="2">
    <location>
        <position position="101"/>
    </location>
    <ligand>
        <name>Zn(2+)</name>
        <dbReference type="ChEBI" id="CHEBI:29105"/>
    </ligand>
</feature>
<feature type="binding site" evidence="2">
    <location>
        <position position="169"/>
    </location>
    <ligand>
        <name>Zn(2+)</name>
        <dbReference type="ChEBI" id="CHEBI:29105"/>
    </ligand>
</feature>
<name>GCH1_SYNP6</name>
<organism>
    <name type="scientific">Synechococcus sp. (strain ATCC 27144 / PCC 6301 / SAUG 1402/1)</name>
    <name type="common">Anacystis nidulans</name>
    <dbReference type="NCBI Taxonomy" id="269084"/>
    <lineage>
        <taxon>Bacteria</taxon>
        <taxon>Bacillati</taxon>
        <taxon>Cyanobacteriota</taxon>
        <taxon>Cyanophyceae</taxon>
        <taxon>Synechococcales</taxon>
        <taxon>Synechococcaceae</taxon>
        <taxon>Synechococcus</taxon>
    </lineage>
</organism>
<keyword id="KW-0342">GTP-binding</keyword>
<keyword id="KW-0378">Hydrolase</keyword>
<keyword id="KW-0479">Metal-binding</keyword>
<keyword id="KW-0547">Nucleotide-binding</keyword>
<keyword id="KW-0554">One-carbon metabolism</keyword>
<keyword id="KW-0862">Zinc</keyword>
<comment type="catalytic activity">
    <reaction evidence="2">
        <text>GTP + H2O = 7,8-dihydroneopterin 3'-triphosphate + formate + H(+)</text>
        <dbReference type="Rhea" id="RHEA:17473"/>
        <dbReference type="ChEBI" id="CHEBI:15377"/>
        <dbReference type="ChEBI" id="CHEBI:15378"/>
        <dbReference type="ChEBI" id="CHEBI:15740"/>
        <dbReference type="ChEBI" id="CHEBI:37565"/>
        <dbReference type="ChEBI" id="CHEBI:58462"/>
        <dbReference type="EC" id="3.5.4.16"/>
    </reaction>
</comment>
<comment type="pathway">
    <text evidence="2">Cofactor biosynthesis; 7,8-dihydroneopterin triphosphate biosynthesis; 7,8-dihydroneopterin triphosphate from GTP: step 1/1.</text>
</comment>
<comment type="subunit">
    <text evidence="1">Toroid-shaped homodecamer, composed of two pentamers of five dimers.</text>
</comment>
<comment type="similarity">
    <text evidence="2">Belongs to the GTP cyclohydrolase I family.</text>
</comment>
<proteinExistence type="inferred from homology"/>
<protein>
    <recommendedName>
        <fullName evidence="2">GTP cyclohydrolase 1</fullName>
        <ecNumber evidence="2">3.5.4.16</ecNumber>
    </recommendedName>
    <alternativeName>
        <fullName evidence="2">GTP cyclohydrolase I</fullName>
        <shortName evidence="2">GTP-CH-I</shortName>
    </alternativeName>
</protein>
<reference key="1">
    <citation type="journal article" date="2007" name="Photosyn. Res.">
        <title>Complete nucleotide sequence of the freshwater unicellular cyanobacterium Synechococcus elongatus PCC 6301 chromosome: gene content and organization.</title>
        <authorList>
            <person name="Sugita C."/>
            <person name="Ogata K."/>
            <person name="Shikata M."/>
            <person name="Jikuya H."/>
            <person name="Takano J."/>
            <person name="Furumichi M."/>
            <person name="Kanehisa M."/>
            <person name="Omata T."/>
            <person name="Sugiura M."/>
            <person name="Sugita M."/>
        </authorList>
    </citation>
    <scope>NUCLEOTIDE SEQUENCE [LARGE SCALE GENOMIC DNA]</scope>
    <source>
        <strain>ATCC 27144 / PCC 6301 / SAUG 1402/1</strain>
    </source>
</reference>
<sequence>MTSPSLNGSNSLVDAIRPETEAVSQAEMEAAVRTLLLGVGEDPEREGLLKTPKRVAEAYRFLTSGYSQSLDDLVNGAIFDEGHNEMVLVRDITAFSLCEHHMLPFMGKVHVAYIPNQKVVGLSKLARIVEMYSRRLQVQERLTRQIAESVQEILDPQGVAVVMEATHMCMVMRGVQKPGSWTVTSAMVGVFQEDQRTREEFLSLIRHQPAAFA</sequence>
<gene>
    <name evidence="2" type="primary">folE</name>
    <name type="ordered locus">syc0054_d</name>
</gene>